<protein>
    <recommendedName>
        <fullName>Chitinase domain-containing protein 1</fullName>
    </recommendedName>
</protein>
<accession>Q66IL0</accession>
<feature type="signal peptide" evidence="2">
    <location>
        <begin position="1"/>
        <end position="20"/>
    </location>
</feature>
<feature type="chain" id="PRO_0000280614" description="Chitinase domain-containing protein 1">
    <location>
        <begin position="21"/>
        <end position="394"/>
    </location>
</feature>
<feature type="domain" description="GH18" evidence="3">
    <location>
        <begin position="80"/>
        <end position="394"/>
    </location>
</feature>
<dbReference type="EMBL" id="BC081307">
    <property type="protein sequence ID" value="AAH81307.1"/>
    <property type="molecule type" value="mRNA"/>
</dbReference>
<dbReference type="RefSeq" id="NP_001008105.1">
    <property type="nucleotide sequence ID" value="NM_001008104.1"/>
</dbReference>
<dbReference type="RefSeq" id="XP_012816413.1">
    <property type="nucleotide sequence ID" value="XM_012960959.3"/>
</dbReference>
<dbReference type="RefSeq" id="XP_012816414.1">
    <property type="nucleotide sequence ID" value="XM_012960960.3"/>
</dbReference>
<dbReference type="RefSeq" id="XP_031755896.1">
    <property type="nucleotide sequence ID" value="XM_031900036.1"/>
</dbReference>
<dbReference type="SMR" id="Q66IL0"/>
<dbReference type="FunCoup" id="Q66IL0">
    <property type="interactions" value="950"/>
</dbReference>
<dbReference type="STRING" id="8364.ENSXETP00000042498"/>
<dbReference type="PaxDb" id="8364-ENSXETP00000041328"/>
<dbReference type="DNASU" id="493467"/>
<dbReference type="GeneID" id="493467"/>
<dbReference type="KEGG" id="xtr:493467"/>
<dbReference type="AGR" id="Xenbase:XB-GENE-5752789"/>
<dbReference type="CTD" id="66005"/>
<dbReference type="Xenbase" id="XB-GENE-5752789">
    <property type="gene designation" value="chid1"/>
</dbReference>
<dbReference type="eggNOG" id="KOG2091">
    <property type="taxonomic scope" value="Eukaryota"/>
</dbReference>
<dbReference type="HOGENOM" id="CLU_035132_2_0_1"/>
<dbReference type="InParanoid" id="Q66IL0"/>
<dbReference type="OMA" id="YSINERI"/>
<dbReference type="OrthoDB" id="10254444at2759"/>
<dbReference type="PhylomeDB" id="Q66IL0"/>
<dbReference type="TreeFam" id="TF319271"/>
<dbReference type="Reactome" id="R-XTR-114608">
    <property type="pathway name" value="Platelet degranulation"/>
</dbReference>
<dbReference type="Proteomes" id="UP000008143">
    <property type="component" value="Chromosome 4"/>
</dbReference>
<dbReference type="Bgee" id="ENSXETG00000019071">
    <property type="expression patterns" value="Expressed in testis and 12 other cell types or tissues"/>
</dbReference>
<dbReference type="ExpressionAtlas" id="Q66IL0">
    <property type="expression patterns" value="baseline"/>
</dbReference>
<dbReference type="GO" id="GO:0005576">
    <property type="term" value="C:extracellular region"/>
    <property type="evidence" value="ECO:0007669"/>
    <property type="project" value="UniProtKB-SubCell"/>
</dbReference>
<dbReference type="GO" id="GO:0005764">
    <property type="term" value="C:lysosome"/>
    <property type="evidence" value="ECO:0007669"/>
    <property type="project" value="UniProtKB-SubCell"/>
</dbReference>
<dbReference type="GO" id="GO:0008061">
    <property type="term" value="F:chitin binding"/>
    <property type="evidence" value="ECO:0007669"/>
    <property type="project" value="InterPro"/>
</dbReference>
<dbReference type="GO" id="GO:0005975">
    <property type="term" value="P:carbohydrate metabolic process"/>
    <property type="evidence" value="ECO:0007669"/>
    <property type="project" value="InterPro"/>
</dbReference>
<dbReference type="CDD" id="cd02876">
    <property type="entry name" value="GH18_SI-CLP"/>
    <property type="match status" value="1"/>
</dbReference>
<dbReference type="FunFam" id="3.10.50.10:FF:000002">
    <property type="entry name" value="Chitinase domain-containing protein 1"/>
    <property type="match status" value="1"/>
</dbReference>
<dbReference type="FunFam" id="3.20.20.80:FF:000028">
    <property type="entry name" value="Chitinase domain-containing protein 1"/>
    <property type="match status" value="1"/>
</dbReference>
<dbReference type="Gene3D" id="3.10.50.10">
    <property type="match status" value="1"/>
</dbReference>
<dbReference type="Gene3D" id="1.10.8.360">
    <property type="entry name" value="3,6-anhydro-alpha-l-galactosidase"/>
    <property type="match status" value="1"/>
</dbReference>
<dbReference type="Gene3D" id="3.20.20.80">
    <property type="entry name" value="Glycosidases"/>
    <property type="match status" value="1"/>
</dbReference>
<dbReference type="InterPro" id="IPR011583">
    <property type="entry name" value="Chitinase_II/V-like_cat"/>
</dbReference>
<dbReference type="InterPro" id="IPR029070">
    <property type="entry name" value="Chitinase_insertion_sf"/>
</dbReference>
<dbReference type="InterPro" id="IPR001223">
    <property type="entry name" value="Glyco_hydro18_cat"/>
</dbReference>
<dbReference type="InterPro" id="IPR017853">
    <property type="entry name" value="Glycoside_hydrolase_SF"/>
</dbReference>
<dbReference type="PANTHER" id="PTHR46066:SF2">
    <property type="entry name" value="CHITINASE DOMAIN-CONTAINING PROTEIN 1"/>
    <property type="match status" value="1"/>
</dbReference>
<dbReference type="PANTHER" id="PTHR46066">
    <property type="entry name" value="CHITINASE DOMAIN-CONTAINING PROTEIN 1 FAMILY MEMBER"/>
    <property type="match status" value="1"/>
</dbReference>
<dbReference type="Pfam" id="PF00704">
    <property type="entry name" value="Glyco_hydro_18"/>
    <property type="match status" value="1"/>
</dbReference>
<dbReference type="SMART" id="SM00636">
    <property type="entry name" value="Glyco_18"/>
    <property type="match status" value="1"/>
</dbReference>
<dbReference type="SUPFAM" id="SSF51445">
    <property type="entry name" value="(Trans)glycosidases"/>
    <property type="match status" value="1"/>
</dbReference>
<dbReference type="PROSITE" id="PS51910">
    <property type="entry name" value="GH18_2"/>
    <property type="match status" value="1"/>
</dbReference>
<keyword id="KW-0458">Lysosome</keyword>
<keyword id="KW-1185">Reference proteome</keyword>
<keyword id="KW-0964">Secreted</keyword>
<keyword id="KW-0732">Signal</keyword>
<organism>
    <name type="scientific">Xenopus tropicalis</name>
    <name type="common">Western clawed frog</name>
    <name type="synonym">Silurana tropicalis</name>
    <dbReference type="NCBI Taxonomy" id="8364"/>
    <lineage>
        <taxon>Eukaryota</taxon>
        <taxon>Metazoa</taxon>
        <taxon>Chordata</taxon>
        <taxon>Craniata</taxon>
        <taxon>Vertebrata</taxon>
        <taxon>Euteleostomi</taxon>
        <taxon>Amphibia</taxon>
        <taxon>Batrachia</taxon>
        <taxon>Anura</taxon>
        <taxon>Pipoidea</taxon>
        <taxon>Pipidae</taxon>
        <taxon>Xenopodinae</taxon>
        <taxon>Xenopus</taxon>
        <taxon>Silurana</taxon>
    </lineage>
</organism>
<proteinExistence type="evidence at transcript level"/>
<sequence>MRLLSTLLFLVAATCPLIHATLSKTDSKKAASKAPETKTRLSDTLVQTRGLVSTDVKAKDIVLEHRSYCAKKLKERHVSADVLGYVTPWNGHGYDIAKTFAAKFTLISPVWLQIKRKGKEAYHITGLHDVDQGWIKDIRKTSKSTQIVPRILFDGWSYQDFESVFSSEDEIEELAGAMVQTAKDERFDGFVVEVWSQLGGQKRQELVHLLTHIGEALRLAKLRFILVIPPALAPGTDHLGMFGRKEFDQLAPVVDSFSLMTYDYSSPQRPGPNSPITWVQACIQLLDPESKWRKKILLGLHFYGMDYSALGASGEPILGNRYIEILKEHKPKLLWDQQIAEHYLEYKKNKGGKHAVFFPTLKSIQVRLDLAEELGTGISIWELGQGLDYFYDLL</sequence>
<gene>
    <name type="primary">chid1</name>
</gene>
<name>CHID1_XENTR</name>
<reference key="1">
    <citation type="submission" date="2004-08" db="EMBL/GenBank/DDBJ databases">
        <authorList>
            <consortium name="NIH - Xenopus Gene Collection (XGC) project"/>
        </authorList>
    </citation>
    <scope>NUCLEOTIDE SEQUENCE [LARGE SCALE MRNA]</scope>
    <source>
        <tissue>Embryo</tissue>
    </source>
</reference>
<comment type="subcellular location">
    <subcellularLocation>
        <location>Secreted</location>
    </subcellularLocation>
    <subcellularLocation>
        <location evidence="1">Lysosome</location>
    </subcellularLocation>
</comment>
<comment type="similarity">
    <text evidence="4">Belongs to the glycosyl hydrolase 18 family.</text>
</comment>
<evidence type="ECO:0000250" key="1"/>
<evidence type="ECO:0000255" key="2"/>
<evidence type="ECO:0000255" key="3">
    <source>
        <dbReference type="PROSITE-ProRule" id="PRU01258"/>
    </source>
</evidence>
<evidence type="ECO:0000305" key="4"/>